<dbReference type="EC" id="3.1.-.-" evidence="1"/>
<dbReference type="EMBL" id="CP000768">
    <property type="protein sequence ID" value="ABS43601.1"/>
    <property type="molecule type" value="Genomic_DNA"/>
</dbReference>
<dbReference type="SMR" id="A7H2G9"/>
<dbReference type="KEGG" id="cjd:JJD26997_0520"/>
<dbReference type="HOGENOM" id="CLU_028328_1_0_7"/>
<dbReference type="Proteomes" id="UP000002302">
    <property type="component" value="Chromosome"/>
</dbReference>
<dbReference type="GO" id="GO:0005886">
    <property type="term" value="C:plasma membrane"/>
    <property type="evidence" value="ECO:0007669"/>
    <property type="project" value="UniProtKB-SubCell"/>
</dbReference>
<dbReference type="GO" id="GO:0003723">
    <property type="term" value="F:RNA binding"/>
    <property type="evidence" value="ECO:0007669"/>
    <property type="project" value="UniProtKB-UniRule"/>
</dbReference>
<dbReference type="GO" id="GO:0004521">
    <property type="term" value="F:RNA endonuclease activity"/>
    <property type="evidence" value="ECO:0007669"/>
    <property type="project" value="UniProtKB-UniRule"/>
</dbReference>
<dbReference type="GO" id="GO:0006402">
    <property type="term" value="P:mRNA catabolic process"/>
    <property type="evidence" value="ECO:0007669"/>
    <property type="project" value="UniProtKB-UniRule"/>
</dbReference>
<dbReference type="CDD" id="cd00077">
    <property type="entry name" value="HDc"/>
    <property type="match status" value="1"/>
</dbReference>
<dbReference type="CDD" id="cd22431">
    <property type="entry name" value="KH-I_RNaseY"/>
    <property type="match status" value="1"/>
</dbReference>
<dbReference type="Gene3D" id="1.10.3210.10">
    <property type="entry name" value="Hypothetical protein af1432"/>
    <property type="match status" value="1"/>
</dbReference>
<dbReference type="Gene3D" id="3.30.1370.10">
    <property type="entry name" value="K Homology domain, type 1"/>
    <property type="match status" value="1"/>
</dbReference>
<dbReference type="HAMAP" id="MF_00335">
    <property type="entry name" value="RNase_Y"/>
    <property type="match status" value="1"/>
</dbReference>
<dbReference type="InterPro" id="IPR003607">
    <property type="entry name" value="HD/PDEase_dom"/>
</dbReference>
<dbReference type="InterPro" id="IPR006674">
    <property type="entry name" value="HD_domain"/>
</dbReference>
<dbReference type="InterPro" id="IPR006675">
    <property type="entry name" value="HDIG_dom"/>
</dbReference>
<dbReference type="InterPro" id="IPR036612">
    <property type="entry name" value="KH_dom_type_1_sf"/>
</dbReference>
<dbReference type="InterPro" id="IPR017705">
    <property type="entry name" value="Ribonuclease_Y"/>
</dbReference>
<dbReference type="InterPro" id="IPR022711">
    <property type="entry name" value="RNase_Y_N"/>
</dbReference>
<dbReference type="NCBIfam" id="TIGR00277">
    <property type="entry name" value="HDIG"/>
    <property type="match status" value="1"/>
</dbReference>
<dbReference type="NCBIfam" id="TIGR03319">
    <property type="entry name" value="RNase_Y"/>
    <property type="match status" value="1"/>
</dbReference>
<dbReference type="PANTHER" id="PTHR12826">
    <property type="entry name" value="RIBONUCLEASE Y"/>
    <property type="match status" value="1"/>
</dbReference>
<dbReference type="PANTHER" id="PTHR12826:SF15">
    <property type="entry name" value="RIBONUCLEASE Y"/>
    <property type="match status" value="1"/>
</dbReference>
<dbReference type="Pfam" id="PF01966">
    <property type="entry name" value="HD"/>
    <property type="match status" value="1"/>
</dbReference>
<dbReference type="Pfam" id="PF12072">
    <property type="entry name" value="RNase_Y_N"/>
    <property type="match status" value="1"/>
</dbReference>
<dbReference type="SMART" id="SM00471">
    <property type="entry name" value="HDc"/>
    <property type="match status" value="1"/>
</dbReference>
<dbReference type="SUPFAM" id="SSF54791">
    <property type="entry name" value="Eukaryotic type KH-domain (KH-domain type I)"/>
    <property type="match status" value="1"/>
</dbReference>
<dbReference type="SUPFAM" id="SSF109604">
    <property type="entry name" value="HD-domain/PDEase-like"/>
    <property type="match status" value="1"/>
</dbReference>
<dbReference type="PROSITE" id="PS51831">
    <property type="entry name" value="HD"/>
    <property type="match status" value="1"/>
</dbReference>
<organism>
    <name type="scientific">Campylobacter jejuni subsp. doylei (strain ATCC BAA-1458 / RM4099 / 269.97)</name>
    <dbReference type="NCBI Taxonomy" id="360109"/>
    <lineage>
        <taxon>Bacteria</taxon>
        <taxon>Pseudomonadati</taxon>
        <taxon>Campylobacterota</taxon>
        <taxon>Epsilonproteobacteria</taxon>
        <taxon>Campylobacterales</taxon>
        <taxon>Campylobacteraceae</taxon>
        <taxon>Campylobacter</taxon>
    </lineage>
</organism>
<reference key="1">
    <citation type="submission" date="2007-07" db="EMBL/GenBank/DDBJ databases">
        <title>Complete genome sequence of Campylobacter jejuni subsp doylei 269.97 isolated from human blood.</title>
        <authorList>
            <person name="Fouts D.E."/>
            <person name="Mongodin E.F."/>
            <person name="Puiu D."/>
            <person name="Sebastian Y."/>
            <person name="Miller W.G."/>
            <person name="Mandrell R.E."/>
            <person name="Lastovica A.J."/>
            <person name="Nelson K.E."/>
        </authorList>
    </citation>
    <scope>NUCLEOTIDE SEQUENCE [LARGE SCALE GENOMIC DNA]</scope>
    <source>
        <strain>ATCC BAA-1458 / RM4099 / 269.97</strain>
    </source>
</reference>
<name>RNY_CAMJD</name>
<sequence>MIESLIALIAAIVGLGIGYLVAKKINDAKYEIFVEQAKAKAKAIEYEAELILKDAKNSILNAELEVKKKYEEKTHKIQKDFNQKLDDLFKKEQKLQQEEEKLKEDKEYLCKSQKHIQDLQSDVDKLKNKYQEKLDDVLKILEHSTRLTQNEAKEIILKKVEENSREQIAHIVRKYEEEAKNEAKRKANFIIAQATSRFAGEFAAERLINVINIKNDELKGRIIGKEGRNVKTLEMVLGVDIIIDDTPGAIIVSCFNLYRRAIATKVIELLVEDGRIQPARIEEIHEKVCKEFDSAILEEGEIIVMDLGLNKIHPEIVKLIGKLKYRASYGQNALAHSLEVAHLAGIIAAECGGDENLARRAGILHDIGKALTHDFEGSHVDLGAELCNRYKEHPVVINAIYAHHGHEEATSIESAAVCAADTLSAARPGARREVLEAFLKRVSELEDIAKSKEGIKNAYAINAGREIRIIANAQLVNDDESVLLAKEIAAEIQEKMQYPGEIKVNVIRELRAIEYAK</sequence>
<proteinExistence type="inferred from homology"/>
<accession>A7H2G9</accession>
<evidence type="ECO:0000255" key="1">
    <source>
        <dbReference type="HAMAP-Rule" id="MF_00335"/>
    </source>
</evidence>
<evidence type="ECO:0000255" key="2">
    <source>
        <dbReference type="PROSITE-ProRule" id="PRU01175"/>
    </source>
</evidence>
<comment type="function">
    <text evidence="1">Endoribonuclease that initiates mRNA decay.</text>
</comment>
<comment type="subcellular location">
    <subcellularLocation>
        <location evidence="1">Cell membrane</location>
        <topology evidence="1">Single-pass membrane protein</topology>
    </subcellularLocation>
</comment>
<comment type="similarity">
    <text evidence="1">Belongs to the RNase Y family.</text>
</comment>
<keyword id="KW-1003">Cell membrane</keyword>
<keyword id="KW-0255">Endonuclease</keyword>
<keyword id="KW-0378">Hydrolase</keyword>
<keyword id="KW-0472">Membrane</keyword>
<keyword id="KW-0540">Nuclease</keyword>
<keyword id="KW-0694">RNA-binding</keyword>
<keyword id="KW-0812">Transmembrane</keyword>
<keyword id="KW-1133">Transmembrane helix</keyword>
<gene>
    <name evidence="1" type="primary">rny</name>
    <name type="ordered locus">JJD26997_0520</name>
</gene>
<protein>
    <recommendedName>
        <fullName evidence="1">Ribonuclease Y</fullName>
        <shortName evidence="1">RNase Y</shortName>
        <ecNumber evidence="1">3.1.-.-</ecNumber>
    </recommendedName>
</protein>
<feature type="chain" id="PRO_0000344837" description="Ribonuclease Y">
    <location>
        <begin position="1"/>
        <end position="517"/>
    </location>
</feature>
<feature type="transmembrane region" description="Helical" evidence="1">
    <location>
        <begin position="1"/>
        <end position="21"/>
    </location>
</feature>
<feature type="domain" description="KH" evidence="1">
    <location>
        <begin position="207"/>
        <end position="273"/>
    </location>
</feature>
<feature type="domain" description="HD" evidence="2">
    <location>
        <begin position="333"/>
        <end position="426"/>
    </location>
</feature>